<protein>
    <recommendedName>
        <fullName evidence="1">Alanine racemase</fullName>
        <ecNumber evidence="1">5.1.1.1</ecNumber>
    </recommendedName>
</protein>
<comment type="function">
    <text evidence="1">Catalyzes the interconversion of L-alanine and D-alanine. May also act on other amino acids.</text>
</comment>
<comment type="catalytic activity">
    <reaction evidence="1">
        <text>L-alanine = D-alanine</text>
        <dbReference type="Rhea" id="RHEA:20249"/>
        <dbReference type="ChEBI" id="CHEBI:57416"/>
        <dbReference type="ChEBI" id="CHEBI:57972"/>
        <dbReference type="EC" id="5.1.1.1"/>
    </reaction>
</comment>
<comment type="cofactor">
    <cofactor evidence="1">
        <name>pyridoxal 5'-phosphate</name>
        <dbReference type="ChEBI" id="CHEBI:597326"/>
    </cofactor>
</comment>
<comment type="pathway">
    <text evidence="1">Amino-acid biosynthesis; D-alanine biosynthesis; D-alanine from L-alanine: step 1/1.</text>
</comment>
<comment type="similarity">
    <text evidence="1">Belongs to the alanine racemase family.</text>
</comment>
<accession>O67687</accession>
<sequence length="338" mass="38203">MPRAILEINSERIRHNVKKLSEFSGKKVIAVIKADAYGIGSIQMAKILEPIEEVDAFAVACVEEGVELRKMGIKKEILILGGVLKDEVPLVEEYFLTPVVSDIEHLRAIGNRDIKFHVKYDTGMGRLGFLNEVIHDPRVEGIMSHLSSPADEEFSKLQIKKFEEIVKKYTKVEKIHMESSAGVVYRVPFTTHIRVGLAMYGEKPLKNYPVDIKPALTLKAKLISVKELPENYPVSYSRTYVTKKKTKTGVVAFGYADGLMKTLSNRSYLLYKGEKLPIFGNITMDMTIVDLKNTDAKVGDWVYVVNEERTFTELAREAGTIPYELMCNLSKRIKRVVV</sequence>
<dbReference type="EC" id="5.1.1.1" evidence="1"/>
<dbReference type="EMBL" id="AE000657">
    <property type="protein sequence ID" value="AAC07650.1"/>
    <property type="molecule type" value="Genomic_DNA"/>
</dbReference>
<dbReference type="PIR" id="E70457">
    <property type="entry name" value="E70457"/>
</dbReference>
<dbReference type="RefSeq" id="NP_214253.1">
    <property type="nucleotide sequence ID" value="NC_000918.1"/>
</dbReference>
<dbReference type="RefSeq" id="WP_010881190.1">
    <property type="nucleotide sequence ID" value="NC_000918.1"/>
</dbReference>
<dbReference type="SMR" id="O67687"/>
<dbReference type="FunCoup" id="O67687">
    <property type="interactions" value="326"/>
</dbReference>
<dbReference type="STRING" id="224324.aq_1827"/>
<dbReference type="EnsemblBacteria" id="AAC07650">
    <property type="protein sequence ID" value="AAC07650"/>
    <property type="gene ID" value="aq_1827"/>
</dbReference>
<dbReference type="KEGG" id="aae:aq_1827"/>
<dbReference type="PATRIC" id="fig|224324.8.peg.1411"/>
<dbReference type="eggNOG" id="COG0787">
    <property type="taxonomic scope" value="Bacteria"/>
</dbReference>
<dbReference type="HOGENOM" id="CLU_028393_2_2_0"/>
<dbReference type="InParanoid" id="O67687"/>
<dbReference type="OrthoDB" id="9813814at2"/>
<dbReference type="UniPathway" id="UPA00042">
    <property type="reaction ID" value="UER00497"/>
</dbReference>
<dbReference type="Proteomes" id="UP000000798">
    <property type="component" value="Chromosome"/>
</dbReference>
<dbReference type="GO" id="GO:0005829">
    <property type="term" value="C:cytosol"/>
    <property type="evidence" value="ECO:0000318"/>
    <property type="project" value="GO_Central"/>
</dbReference>
<dbReference type="GO" id="GO:0008784">
    <property type="term" value="F:alanine racemase activity"/>
    <property type="evidence" value="ECO:0000318"/>
    <property type="project" value="GO_Central"/>
</dbReference>
<dbReference type="GO" id="GO:0030170">
    <property type="term" value="F:pyridoxal phosphate binding"/>
    <property type="evidence" value="ECO:0000318"/>
    <property type="project" value="GO_Central"/>
</dbReference>
<dbReference type="GO" id="GO:0030632">
    <property type="term" value="P:D-alanine biosynthetic process"/>
    <property type="evidence" value="ECO:0000318"/>
    <property type="project" value="GO_Central"/>
</dbReference>
<dbReference type="CDD" id="cd00430">
    <property type="entry name" value="PLPDE_III_AR"/>
    <property type="match status" value="1"/>
</dbReference>
<dbReference type="FunFam" id="3.20.20.10:FF:000002">
    <property type="entry name" value="Alanine racemase"/>
    <property type="match status" value="1"/>
</dbReference>
<dbReference type="Gene3D" id="3.20.20.10">
    <property type="entry name" value="Alanine racemase"/>
    <property type="match status" value="1"/>
</dbReference>
<dbReference type="Gene3D" id="2.40.37.10">
    <property type="entry name" value="Lyase, Ornithine Decarboxylase, Chain A, domain 1"/>
    <property type="match status" value="1"/>
</dbReference>
<dbReference type="HAMAP" id="MF_01201">
    <property type="entry name" value="Ala_racemase"/>
    <property type="match status" value="1"/>
</dbReference>
<dbReference type="InterPro" id="IPR000821">
    <property type="entry name" value="Ala_racemase"/>
</dbReference>
<dbReference type="InterPro" id="IPR009006">
    <property type="entry name" value="Ala_racemase/Decarboxylase_C"/>
</dbReference>
<dbReference type="InterPro" id="IPR011079">
    <property type="entry name" value="Ala_racemase_C"/>
</dbReference>
<dbReference type="InterPro" id="IPR001608">
    <property type="entry name" value="Ala_racemase_N"/>
</dbReference>
<dbReference type="InterPro" id="IPR020622">
    <property type="entry name" value="Ala_racemase_pyridoxalP-BS"/>
</dbReference>
<dbReference type="InterPro" id="IPR029066">
    <property type="entry name" value="PLP-binding_barrel"/>
</dbReference>
<dbReference type="NCBIfam" id="TIGR00492">
    <property type="entry name" value="alr"/>
    <property type="match status" value="1"/>
</dbReference>
<dbReference type="PANTHER" id="PTHR30511">
    <property type="entry name" value="ALANINE RACEMASE"/>
    <property type="match status" value="1"/>
</dbReference>
<dbReference type="PANTHER" id="PTHR30511:SF0">
    <property type="entry name" value="ALANINE RACEMASE, CATABOLIC-RELATED"/>
    <property type="match status" value="1"/>
</dbReference>
<dbReference type="Pfam" id="PF00842">
    <property type="entry name" value="Ala_racemase_C"/>
    <property type="match status" value="1"/>
</dbReference>
<dbReference type="Pfam" id="PF01168">
    <property type="entry name" value="Ala_racemase_N"/>
    <property type="match status" value="1"/>
</dbReference>
<dbReference type="PRINTS" id="PR00992">
    <property type="entry name" value="ALARACEMASE"/>
</dbReference>
<dbReference type="SMART" id="SM01005">
    <property type="entry name" value="Ala_racemase_C"/>
    <property type="match status" value="1"/>
</dbReference>
<dbReference type="SUPFAM" id="SSF50621">
    <property type="entry name" value="Alanine racemase C-terminal domain-like"/>
    <property type="match status" value="1"/>
</dbReference>
<dbReference type="SUPFAM" id="SSF51419">
    <property type="entry name" value="PLP-binding barrel"/>
    <property type="match status" value="1"/>
</dbReference>
<dbReference type="PROSITE" id="PS00395">
    <property type="entry name" value="ALANINE_RACEMASE"/>
    <property type="match status" value="1"/>
</dbReference>
<feature type="chain" id="PRO_0000114495" description="Alanine racemase">
    <location>
        <begin position="1"/>
        <end position="338"/>
    </location>
</feature>
<feature type="active site" description="Proton acceptor; specific for D-alanine" evidence="1">
    <location>
        <position position="33"/>
    </location>
</feature>
<feature type="active site" description="Proton acceptor; specific for L-alanine" evidence="1">
    <location>
        <position position="236"/>
    </location>
</feature>
<feature type="binding site" evidence="1">
    <location>
        <position position="126"/>
    </location>
    <ligand>
        <name>substrate</name>
    </ligand>
</feature>
<feature type="binding site" evidence="1">
    <location>
        <position position="284"/>
    </location>
    <ligand>
        <name>substrate</name>
    </ligand>
</feature>
<feature type="modified residue" description="N6-(pyridoxal phosphate)lysine" evidence="1">
    <location>
        <position position="33"/>
    </location>
</feature>
<keyword id="KW-0413">Isomerase</keyword>
<keyword id="KW-0663">Pyridoxal phosphate</keyword>
<keyword id="KW-1185">Reference proteome</keyword>
<organism>
    <name type="scientific">Aquifex aeolicus (strain VF5)</name>
    <dbReference type="NCBI Taxonomy" id="224324"/>
    <lineage>
        <taxon>Bacteria</taxon>
        <taxon>Pseudomonadati</taxon>
        <taxon>Aquificota</taxon>
        <taxon>Aquificia</taxon>
        <taxon>Aquificales</taxon>
        <taxon>Aquificaceae</taxon>
        <taxon>Aquifex</taxon>
    </lineage>
</organism>
<gene>
    <name type="primary">alr</name>
    <name type="ordered locus">aq_1827</name>
</gene>
<proteinExistence type="inferred from homology"/>
<name>ALR_AQUAE</name>
<evidence type="ECO:0000255" key="1">
    <source>
        <dbReference type="HAMAP-Rule" id="MF_01201"/>
    </source>
</evidence>
<reference key="1">
    <citation type="journal article" date="1998" name="Nature">
        <title>The complete genome of the hyperthermophilic bacterium Aquifex aeolicus.</title>
        <authorList>
            <person name="Deckert G."/>
            <person name="Warren P.V."/>
            <person name="Gaasterland T."/>
            <person name="Young W.G."/>
            <person name="Lenox A.L."/>
            <person name="Graham D.E."/>
            <person name="Overbeek R."/>
            <person name="Snead M.A."/>
            <person name="Keller M."/>
            <person name="Aujay M."/>
            <person name="Huber R."/>
            <person name="Feldman R.A."/>
            <person name="Short J.M."/>
            <person name="Olsen G.J."/>
            <person name="Swanson R.V."/>
        </authorList>
    </citation>
    <scope>NUCLEOTIDE SEQUENCE [LARGE SCALE GENOMIC DNA]</scope>
    <source>
        <strain>VF5</strain>
    </source>
</reference>